<feature type="chain" id="PRO_0000207308" description="CRISPR-associated endonuclease/helicase Cas3">
    <location>
        <begin position="1"/>
        <end position="888"/>
    </location>
</feature>
<feature type="domain" description="HD Cas3-type" evidence="4">
    <location>
        <begin position="20"/>
        <end position="231"/>
    </location>
</feature>
<feature type="domain" description="Helicase ATP-binding" evidence="2">
    <location>
        <begin position="301"/>
        <end position="504"/>
    </location>
</feature>
<feature type="domain" description="Helicase C-terminal" evidence="3">
    <location>
        <begin position="556"/>
        <end position="735"/>
    </location>
</feature>
<feature type="short sequence motif" description="DEAH box">
    <location>
        <begin position="452"/>
        <end position="455"/>
    </location>
</feature>
<feature type="binding site" evidence="1">
    <location>
        <position position="75"/>
    </location>
    <ligand>
        <name>Mg(2+)</name>
        <dbReference type="ChEBI" id="CHEBI:18420"/>
    </ligand>
</feature>
<feature type="binding site" evidence="1">
    <location>
        <position position="160"/>
    </location>
    <ligand>
        <name>Mg(2+)</name>
        <dbReference type="ChEBI" id="CHEBI:18420"/>
    </ligand>
</feature>
<feature type="binding site" evidence="2">
    <location>
        <begin position="314"/>
        <end position="321"/>
    </location>
    <ligand>
        <name>ATP</name>
        <dbReference type="ChEBI" id="CHEBI:30616"/>
    </ligand>
</feature>
<feature type="mutagenesis site" description="Loss of CRISPR immunity to lambda DNA and of CRISPR-mediated plasmid curing." evidence="6 7">
    <original>H</original>
    <variation>A</variation>
    <location>
        <position position="74"/>
    </location>
</feature>
<feature type="mutagenesis site" description="75% R-loop formation." evidence="6 7">
    <original>H</original>
    <variation>G</variation>
    <location>
        <position position="74"/>
    </location>
</feature>
<feature type="mutagenesis site" description="Loss of CRISPR immunity to lambda DNA and of CRISPR-mediated plasmid curing." evidence="6 7">
    <original>D</original>
    <variation>A</variation>
    <location>
        <position position="75"/>
    </location>
</feature>
<feature type="mutagenesis site" description="10% R-loop formation." evidence="6 7">
    <original>D</original>
    <variation>G</variation>
    <location>
        <position position="75"/>
    </location>
</feature>
<feature type="mutagenesis site" description="Loss of CRISPR immunity to lambda DNA and of CRISPR-mediated plasmid curing." evidence="6 7">
    <original>K</original>
    <variation>A</variation>
    <location>
        <position position="78"/>
    </location>
</feature>
<feature type="mutagenesis site" description="Less than 5% R-loop formation, binds DNA normally. 100-fold greater sensitivity to bacteriophage lambda. No effect on R-loop formation; when associated with L-320." evidence="6 7">
    <original>K</original>
    <variation>L</variation>
    <location>
        <position position="78"/>
    </location>
</feature>
<feature type="mutagenesis site" description="No effect on R-loop formation. Impaired R-loop unwinding." evidence="6">
    <original>GS</original>
    <variation>SY</variation>
    <location>
        <begin position="317"/>
        <end position="318"/>
    </location>
</feature>
<feature type="mutagenesis site" description="Double R-loop formation. 2-4 fold decreased ATPase. No effect on R-loop formation; when associated with L-78." evidence="6 7">
    <original>K</original>
    <variation>L</variation>
    <location>
        <position position="320"/>
    </location>
</feature>
<feature type="mutagenesis site" description="Loss of CRISPR immunity to lambda DNA and of CRISPR-mediated plasmid curing. Nicks target plasmid DNA but does not degrade it." evidence="6 7">
    <original>K</original>
    <variation>N</variation>
    <location>
        <position position="320"/>
    </location>
</feature>
<feature type="mutagenesis site" description="Loss of CRISPR immunity to lambda DNA and of CRISPR-mediated plasmid curing." evidence="7">
    <original>D</original>
    <variation>N</variation>
    <location>
        <position position="452"/>
    </location>
</feature>
<feature type="mutagenesis site" description="Loss of R-loop unwinding." evidence="6">
    <original>H</original>
    <variation>L</variation>
    <location>
        <position position="455"/>
    </location>
</feature>
<feature type="mutagenesis site" description="Retains CRISPR immunity to lambda DNA and CRISPR-mediated plasmid curing." evidence="7">
    <original>SAT</original>
    <variation>AAA</variation>
    <location>
        <begin position="483"/>
        <end position="485"/>
    </location>
</feature>
<feature type="sequence conflict" description="In Ref. 3; Y07525." evidence="8" ref="3">
    <original>G</original>
    <variation>R</variation>
    <location>
        <position position="118"/>
    </location>
</feature>
<feature type="sequence conflict" description="In Ref. 3; Y07525." evidence="8" ref="3">
    <original>QQ</original>
    <variation>PL</variation>
    <location>
        <begin position="334"/>
        <end position="335"/>
    </location>
</feature>
<protein>
    <recommendedName>
        <fullName>CRISPR-associated endonuclease/helicase Cas3</fullName>
        <ecNumber>3.1.-.-</ecNumber>
        <ecNumber>3.6.4.-</ecNumber>
    </recommendedName>
</protein>
<proteinExistence type="evidence at protein level"/>
<accession>P38036</accession>
<accession>Q2MA68</accession>
<accession>Q46902</accession>
<gene>
    <name type="primary">ygcB</name>
    <name type="synonym">cas3</name>
    <name type="ordered locus">b2761</name>
    <name type="ordered locus">JW2731</name>
</gene>
<organism>
    <name type="scientific">Escherichia coli (strain K12)</name>
    <dbReference type="NCBI Taxonomy" id="83333"/>
    <lineage>
        <taxon>Bacteria</taxon>
        <taxon>Pseudomonadati</taxon>
        <taxon>Pseudomonadota</taxon>
        <taxon>Gammaproteobacteria</taxon>
        <taxon>Enterobacterales</taxon>
        <taxon>Enterobacteriaceae</taxon>
        <taxon>Escherichia</taxon>
    </lineage>
</organism>
<sequence>MEPFKYICHYWGKSSKSLTKGNDIHLLIYHCLDVAAVADCWWDQSVVLQNTFCRNEMLSKQRVKAWLLFFIALHDIGKFDIRFQYKSAESWLKLNPATPSLNGPSTQMCRKFNHGAAGLYWFNQDSLSEQSLGDFFSFFDAAPHPYESWFPWVEAVTGHHGFILHSQDQDKSRWEMPASLASYAAQDKQAREEWISVLEALFLTPAGLSINDIPPDCSSLLAGFCSLADWLGSWTTTNTFLFNEDAPSDINALRTYFQDRQQDASRVLELSGLVSNKRCYEGVHALLDNGYQPRQLQVLVDALPVAPGLTVIEAPTGSGKTETALAYAWKLIDQQIADSVIFALPTQATANAMLTRMEASASHLFSSPNLILAHGNSRFNHLFQSIKSRAITEQGQEEAWVQCCQWLSQSNKKVFLGQIGVCTIDQVLISVLPVKHRFIRGLGIGRSVLIVDEVHAYDTYMNGLLEAVLKAQADVGGSVILLSATLPMKQKQKLLDTYGLHTDPVENNSAYPLINWRGVNGAQRFDLLAHPEQLPPRFSIQPEPICLADMLPDLTMLERMIAAANAGAQVCLICNLVDVAQVCYQRLKELNNTQVDIDLFHARFTLNDRREKENRVISNFGKNGKRNVGRILVATQVVEQSLDVDFDWLITQHCPADLLFQRLGRLHRHHRKYRPAGFEIPVATILLPDGEGYGRHEHIYSNVRVMWRTQQHIEELNGASLFFPDAYRQWLDSIYDDAEMDEPEWVGNGMDKFESAECEKRFKARKVLQWAEEYSLQDNDETILAVTRDGEMSLPLLPYVQTSSGKQLLDGQVYEDLSHEQQYEALALNRVNVPFTWKRSFSEVVDEDGLLWLEGKQNLDGWVWQGNSIVITYTGDEGMTRVIPANPK</sequence>
<keyword id="KW-0051">Antiviral defense</keyword>
<keyword id="KW-0067">ATP-binding</keyword>
<keyword id="KW-0238">DNA-binding</keyword>
<keyword id="KW-0255">Endonuclease</keyword>
<keyword id="KW-0269">Exonuclease</keyword>
<keyword id="KW-0347">Helicase</keyword>
<keyword id="KW-0378">Hydrolase</keyword>
<keyword id="KW-0460">Magnesium</keyword>
<keyword id="KW-0479">Metal-binding</keyword>
<keyword id="KW-0540">Nuclease</keyword>
<keyword id="KW-0547">Nucleotide-binding</keyword>
<keyword id="KW-1185">Reference proteome</keyword>
<evidence type="ECO:0000255" key="1"/>
<evidence type="ECO:0000255" key="2">
    <source>
        <dbReference type="PROSITE-ProRule" id="PRU00541"/>
    </source>
</evidence>
<evidence type="ECO:0000255" key="3">
    <source>
        <dbReference type="PROSITE-ProRule" id="PRU00542"/>
    </source>
</evidence>
<evidence type="ECO:0000255" key="4">
    <source>
        <dbReference type="PROSITE-ProRule" id="PRU00974"/>
    </source>
</evidence>
<evidence type="ECO:0000269" key="5">
    <source>
    </source>
</evidence>
<evidence type="ECO:0000269" key="6">
    <source>
    </source>
</evidence>
<evidence type="ECO:0000269" key="7">
    <source>
    </source>
</evidence>
<evidence type="ECO:0000305" key="8"/>
<dbReference type="EC" id="3.1.-.-"/>
<dbReference type="EC" id="3.6.4.-"/>
<dbReference type="EMBL" id="U29579">
    <property type="protein sequence ID" value="AAA69271.1"/>
    <property type="molecule type" value="Genomic_DNA"/>
</dbReference>
<dbReference type="EMBL" id="U00096">
    <property type="protein sequence ID" value="AAC75803.1"/>
    <property type="molecule type" value="Genomic_DNA"/>
</dbReference>
<dbReference type="EMBL" id="AP009048">
    <property type="protein sequence ID" value="BAE76838.1"/>
    <property type="molecule type" value="Genomic_DNA"/>
</dbReference>
<dbReference type="EMBL" id="Y07525">
    <property type="status" value="NOT_ANNOTATED_CDS"/>
    <property type="molecule type" value="Genomic_DNA"/>
</dbReference>
<dbReference type="PIR" id="E65057">
    <property type="entry name" value="E65057"/>
</dbReference>
<dbReference type="RefSeq" id="NP_417241.1">
    <property type="nucleotide sequence ID" value="NC_000913.3"/>
</dbReference>
<dbReference type="RefSeq" id="WP_000433152.1">
    <property type="nucleotide sequence ID" value="NZ_LN832404.1"/>
</dbReference>
<dbReference type="EMDB" id="EMD-5930"/>
<dbReference type="SMR" id="P38036"/>
<dbReference type="BioGRID" id="4260740">
    <property type="interactions" value="85"/>
</dbReference>
<dbReference type="FunCoup" id="P38036">
    <property type="interactions" value="13"/>
</dbReference>
<dbReference type="IntAct" id="P38036">
    <property type="interactions" value="7"/>
</dbReference>
<dbReference type="STRING" id="511145.b2761"/>
<dbReference type="PaxDb" id="511145-b2761"/>
<dbReference type="EnsemblBacteria" id="AAC75803">
    <property type="protein sequence ID" value="AAC75803"/>
    <property type="gene ID" value="b2761"/>
</dbReference>
<dbReference type="GeneID" id="947229"/>
<dbReference type="KEGG" id="ecj:JW2731"/>
<dbReference type="KEGG" id="eco:b2761"/>
<dbReference type="KEGG" id="ecoc:C3026_15175"/>
<dbReference type="PATRIC" id="fig|1411691.4.peg.3976"/>
<dbReference type="EchoBASE" id="EB2516"/>
<dbReference type="eggNOG" id="COG1203">
    <property type="taxonomic scope" value="Bacteria"/>
</dbReference>
<dbReference type="HOGENOM" id="CLU_013924_2_0_6"/>
<dbReference type="InParanoid" id="P38036"/>
<dbReference type="OMA" id="CVCWIRN"/>
<dbReference type="OrthoDB" id="9810236at2"/>
<dbReference type="PhylomeDB" id="P38036"/>
<dbReference type="BioCyc" id="EcoCyc:EG12634-MONOMER"/>
<dbReference type="PRO" id="PR:P38036"/>
<dbReference type="Proteomes" id="UP000000625">
    <property type="component" value="Chromosome"/>
</dbReference>
<dbReference type="GO" id="GO:0008296">
    <property type="term" value="F:3'-5'-DNA exonuclease activity"/>
    <property type="evidence" value="ECO:0000314"/>
    <property type="project" value="EcoCyc"/>
</dbReference>
<dbReference type="GO" id="GO:0005524">
    <property type="term" value="F:ATP binding"/>
    <property type="evidence" value="ECO:0007669"/>
    <property type="project" value="UniProtKB-KW"/>
</dbReference>
<dbReference type="GO" id="GO:0033677">
    <property type="term" value="F:DNA/RNA helicase activity"/>
    <property type="evidence" value="ECO:0000314"/>
    <property type="project" value="EcoCyc"/>
</dbReference>
<dbReference type="GO" id="GO:0097098">
    <property type="term" value="F:DNA/RNA hybrid annealing activity"/>
    <property type="evidence" value="ECO:0000314"/>
    <property type="project" value="EcoCyc"/>
</dbReference>
<dbReference type="GO" id="GO:0003690">
    <property type="term" value="F:double-stranded DNA binding"/>
    <property type="evidence" value="ECO:0000314"/>
    <property type="project" value="EcoCyc"/>
</dbReference>
<dbReference type="GO" id="GO:0000287">
    <property type="term" value="F:magnesium ion binding"/>
    <property type="evidence" value="ECO:0000269"/>
    <property type="project" value="EcoCyc"/>
</dbReference>
<dbReference type="GO" id="GO:0003723">
    <property type="term" value="F:RNA binding"/>
    <property type="evidence" value="ECO:0000318"/>
    <property type="project" value="GO_Central"/>
</dbReference>
<dbReference type="GO" id="GO:0003724">
    <property type="term" value="F:RNA helicase activity"/>
    <property type="evidence" value="ECO:0000318"/>
    <property type="project" value="GO_Central"/>
</dbReference>
<dbReference type="GO" id="GO:0000014">
    <property type="term" value="F:single-stranded DNA endodeoxyribonuclease activity"/>
    <property type="evidence" value="ECO:0000314"/>
    <property type="project" value="EcoCyc"/>
</dbReference>
<dbReference type="GO" id="GO:0051607">
    <property type="term" value="P:defense response to virus"/>
    <property type="evidence" value="ECO:0000314"/>
    <property type="project" value="EcoCyc"/>
</dbReference>
<dbReference type="CDD" id="cd09641">
    <property type="entry name" value="Cas3''_I"/>
    <property type="match status" value="1"/>
</dbReference>
<dbReference type="CDD" id="cd09639">
    <property type="entry name" value="Cas3_I"/>
    <property type="match status" value="1"/>
</dbReference>
<dbReference type="Gene3D" id="1.10.3210.30">
    <property type="match status" value="1"/>
</dbReference>
<dbReference type="Gene3D" id="3.40.50.300">
    <property type="entry name" value="P-loop containing nucleotide triphosphate hydrolases"/>
    <property type="match status" value="2"/>
</dbReference>
<dbReference type="InterPro" id="IPR054712">
    <property type="entry name" value="Cas3-like_dom"/>
</dbReference>
<dbReference type="InterPro" id="IPR006483">
    <property type="entry name" value="CRISPR-assoc_Cas3_HD"/>
</dbReference>
<dbReference type="InterPro" id="IPR038257">
    <property type="entry name" value="CRISPR-assoc_Cas3_HD_sf"/>
</dbReference>
<dbReference type="InterPro" id="IPR011545">
    <property type="entry name" value="DEAD/DEAH_box_helicase_dom"/>
</dbReference>
<dbReference type="InterPro" id="IPR050547">
    <property type="entry name" value="DEAD_box_RNA_helicases"/>
</dbReference>
<dbReference type="InterPro" id="IPR014001">
    <property type="entry name" value="Helicase_ATP-bd"/>
</dbReference>
<dbReference type="InterPro" id="IPR001650">
    <property type="entry name" value="Helicase_C-like"/>
</dbReference>
<dbReference type="InterPro" id="IPR006474">
    <property type="entry name" value="Helicase_Cas3_CRISPR-ass_core"/>
</dbReference>
<dbReference type="InterPro" id="IPR027417">
    <property type="entry name" value="P-loop_NTPase"/>
</dbReference>
<dbReference type="NCBIfam" id="TIGR01587">
    <property type="entry name" value="cas3_core"/>
    <property type="match status" value="1"/>
</dbReference>
<dbReference type="NCBIfam" id="TIGR01596">
    <property type="entry name" value="cas3_HD"/>
    <property type="match status" value="1"/>
</dbReference>
<dbReference type="NCBIfam" id="NF007248">
    <property type="entry name" value="PRK09694.1"/>
    <property type="match status" value="1"/>
</dbReference>
<dbReference type="PANTHER" id="PTHR47963:SF9">
    <property type="entry name" value="CRISPR-ASSOCIATED ENDONUCLEASE_HELICASE CAS3"/>
    <property type="match status" value="1"/>
</dbReference>
<dbReference type="PANTHER" id="PTHR47963">
    <property type="entry name" value="DEAD-BOX ATP-DEPENDENT RNA HELICASE 47, MITOCHONDRIAL"/>
    <property type="match status" value="1"/>
</dbReference>
<dbReference type="Pfam" id="PF22590">
    <property type="entry name" value="Cas3-like_C_2"/>
    <property type="match status" value="1"/>
</dbReference>
<dbReference type="Pfam" id="PF18019">
    <property type="entry name" value="Cas3_HD"/>
    <property type="match status" value="1"/>
</dbReference>
<dbReference type="Pfam" id="PF00270">
    <property type="entry name" value="DEAD"/>
    <property type="match status" value="1"/>
</dbReference>
<dbReference type="SMART" id="SM00487">
    <property type="entry name" value="DEXDc"/>
    <property type="match status" value="1"/>
</dbReference>
<dbReference type="SMART" id="SM00490">
    <property type="entry name" value="HELICc"/>
    <property type="match status" value="1"/>
</dbReference>
<dbReference type="SUPFAM" id="SSF52540">
    <property type="entry name" value="P-loop containing nucleoside triphosphate hydrolases"/>
    <property type="match status" value="1"/>
</dbReference>
<dbReference type="PROSITE" id="PS51643">
    <property type="entry name" value="HD_CAS3"/>
    <property type="match status" value="1"/>
</dbReference>
<dbReference type="PROSITE" id="PS51192">
    <property type="entry name" value="HELICASE_ATP_BIND_1"/>
    <property type="match status" value="1"/>
</dbReference>
<dbReference type="PROSITE" id="PS51194">
    <property type="entry name" value="HELICASE_CTER"/>
    <property type="match status" value="1"/>
</dbReference>
<reference key="1">
    <citation type="journal article" date="1997" name="Science">
        <title>The complete genome sequence of Escherichia coli K-12.</title>
        <authorList>
            <person name="Blattner F.R."/>
            <person name="Plunkett G. III"/>
            <person name="Bloch C.A."/>
            <person name="Perna N.T."/>
            <person name="Burland V."/>
            <person name="Riley M."/>
            <person name="Collado-Vides J."/>
            <person name="Glasner J.D."/>
            <person name="Rode C.K."/>
            <person name="Mayhew G.F."/>
            <person name="Gregor J."/>
            <person name="Davis N.W."/>
            <person name="Kirkpatrick H.A."/>
            <person name="Goeden M.A."/>
            <person name="Rose D.J."/>
            <person name="Mau B."/>
            <person name="Shao Y."/>
        </authorList>
    </citation>
    <scope>NUCLEOTIDE SEQUENCE [LARGE SCALE GENOMIC DNA]</scope>
    <source>
        <strain>K12 / MG1655 / ATCC 47076</strain>
    </source>
</reference>
<reference key="2">
    <citation type="journal article" date="2006" name="Mol. Syst. Biol.">
        <title>Highly accurate genome sequences of Escherichia coli K-12 strains MG1655 and W3110.</title>
        <authorList>
            <person name="Hayashi K."/>
            <person name="Morooka N."/>
            <person name="Yamamoto Y."/>
            <person name="Fujita K."/>
            <person name="Isono K."/>
            <person name="Choi S."/>
            <person name="Ohtsubo E."/>
            <person name="Baba T."/>
            <person name="Wanner B.L."/>
            <person name="Mori H."/>
            <person name="Horiuchi T."/>
        </authorList>
    </citation>
    <scope>NUCLEOTIDE SEQUENCE [LARGE SCALE GENOMIC DNA]</scope>
    <source>
        <strain>K12 / W3110 / ATCC 27325 / DSM 5911</strain>
    </source>
</reference>
<reference key="3">
    <citation type="journal article" date="1991" name="Mol. Gen. Genet.">
        <title>Characterisation of the gene cysH and of its product phospho-adenylylsulphate reductase from Escherichia coli.</title>
        <authorList>
            <person name="Krone F.A."/>
            <person name="Westphal G."/>
            <person name="Schwenn J.D."/>
        </authorList>
    </citation>
    <scope>NUCLEOTIDE SEQUENCE [GENOMIC DNA] OF 1-335</scope>
    <source>
        <strain>K12</strain>
    </source>
</reference>
<reference key="4">
    <citation type="journal article" date="1994" name="Nucleic Acids Res.">
        <title>Intrinsic and extrinsic approaches for detecting genes in a bacterial genome.</title>
        <authorList>
            <person name="Borodovsky M."/>
            <person name="Rudd K.E."/>
            <person name="Koonin E.V."/>
        </authorList>
    </citation>
    <scope>IDENTIFICATION</scope>
</reference>
<reference key="5">
    <citation type="journal article" date="2008" name="Science">
        <title>Small CRISPR RNAs guide antiviral defense in prokaryotes.</title>
        <authorList>
            <person name="Brouns S.J."/>
            <person name="Jore M.M."/>
            <person name="Lundgren M."/>
            <person name="Westra E.R."/>
            <person name="Slijkhuis R.J."/>
            <person name="Snijders A.P."/>
            <person name="Dickman M.J."/>
            <person name="Makarova K.S."/>
            <person name="Koonin E.V."/>
            <person name="van der Oost J."/>
        </authorList>
    </citation>
    <scope>FUNCTION</scope>
    <scope>DISRUPTION PHENOTYPE</scope>
    <source>
        <strain>K12 / W3110 / ATCC 27325 / DSM 5911</strain>
    </source>
</reference>
<reference key="6">
    <citation type="journal article" date="2011" name="Biochem. J.">
        <title>Helicase dissociation and annealing of RNA-DNA hybrids by Escherichia coli Cas3 protein.</title>
        <authorList>
            <person name="Howard J.A."/>
            <person name="Delmas S."/>
            <person name="Ivancic-Bace I."/>
            <person name="Bolt E.L."/>
        </authorList>
    </citation>
    <scope>FUNCTION AS A HELICASE</scope>
    <scope>FUNCTION IN FORMING R-LOOPS</scope>
    <scope>COFACTOR</scope>
    <scope>DNA-BINDING</scope>
    <scope>MUTAGENESIS OF HIS-74; ASP-75; LYS-78; 317-GLY-SER-318; LYS-320 AND HIS-455</scope>
    <source>
        <strain>K12 / MG1655 / ATCC 47076</strain>
    </source>
</reference>
<reference key="7">
    <citation type="journal article" date="2012" name="Mol. Cell">
        <title>CRISPR immunity relies on the consecutive binding and degradation of negatively supercoiled invader DNA by Cascade and Cas3.</title>
        <authorList>
            <person name="Westra E.R."/>
            <person name="van Erp P.B."/>
            <person name="Kunne T."/>
            <person name="Wong S.P."/>
            <person name="Staals R.H."/>
            <person name="Seegers C.L."/>
            <person name="Bollen S."/>
            <person name="Jore M.M."/>
            <person name="Semenova E."/>
            <person name="Severinov K."/>
            <person name="de Vos W.M."/>
            <person name="Dame R.T."/>
            <person name="de Vries R."/>
            <person name="Brouns S.J."/>
            <person name="van der Oost J."/>
        </authorList>
    </citation>
    <scope>FUNCTION AS AN ENDONUCLEASE</scope>
    <scope>FUNCTION AS AN EXONUCLEASE</scope>
    <scope>COFACTOR</scope>
    <scope>INTERACTION WITH CASA</scope>
    <scope>MUTAGENESIS OF HIS-74; ASP-75; LYS-78; LYS-320; ASP-452 AND 483-SER--THR-485</scope>
    <source>
        <strain>K12 / MG1655 / ATCC 47076</strain>
    </source>
</reference>
<name>CAS3_ECOLI</name>
<comment type="function">
    <text>CRISPR (clustered regularly interspaced short palindromic repeat), is an adaptive immune system that provides protection against mobile genetic elements (viruses, transposable elements and conjugative plasmids). CRISPR clusters contain sequences complementary to antecedent mobile elements and target invading nucleic acids. CRISPR clusters are transcribed and processed into CRISPR RNA (crRNA). Cas3 plus Cascade participate in CRISPR interference, the third stage of CRISPR immunity.</text>
</comment>
<comment type="function">
    <text>Acts as an endonuclease, a 3'-5'exonuclease, and an ATP-dependent dsDNA helicase. Anneals and unwinds R-loops (in which crRNA binds the target DNA, displacing the noncomplementary strand). Unwinding requires ATP, annealing does not. Required along with the Cascade complex for resistance to bacteriophage lambda infection as well as the ability to cure CRISPR-encoding high-copy number plasmid. A Cas3-CasA fusion protein purified with the Cascade complex nicks target plasmid in the presence but not absence of Mg(2+), and degrades plasmid fully in the presence of Mg(2+) and ATP, suggesting the helicase activity is required for complete degradation.</text>
</comment>
<comment type="cofactor">
    <cofactor evidence="6 7">
        <name>Mg(2+)</name>
        <dbReference type="ChEBI" id="CHEBI:18420"/>
    </cofactor>
</comment>
<comment type="subunit">
    <text evidence="7">Interacts with the CasA subunit of Cascade once Cascade has recognized target DNA.</text>
</comment>
<comment type="domain">
    <text>Proteins of this family have an N-terminal nuclease domain and a C-terminal helicase/ATPase domain. In some CRISPR/Cas systems the domains are swapped, in others they are encoded separately.</text>
</comment>
<comment type="disruption phenotype">
    <text evidence="5">Loss of plasmid silencing.</text>
</comment>
<comment type="similarity">
    <text evidence="8">In the N-terminal section; belongs to the CRISPR-associated nuclease Cas3-HD family.</text>
</comment>
<comment type="similarity">
    <text evidence="8">In the central section; belongs to the CRISPR-associated helicase Cas3 family.</text>
</comment>